<keyword id="KW-0046">Antibiotic resistance</keyword>
<keyword id="KW-0488">Methylation</keyword>
<keyword id="KW-0687">Ribonucleoprotein</keyword>
<keyword id="KW-0689">Ribosomal protein</keyword>
<keyword id="KW-0694">RNA-binding</keyword>
<keyword id="KW-0699">rRNA-binding</keyword>
<keyword id="KW-0820">tRNA-binding</keyword>
<reference key="1">
    <citation type="journal article" date="1997" name="J. Bacteriol.">
        <title>Use of rpsL for dominance selection and gene replacement in Streptomyces roseosporus.</title>
        <authorList>
            <person name="Hosted T.J."/>
            <person name="Baltz R.H."/>
        </authorList>
    </citation>
    <scope>NUCLEOTIDE SEQUENCE [GENOMIC DNA]</scope>
    <source>
        <strain>ATCC 31568 / A21978.6 / NRRL 11379</strain>
    </source>
</reference>
<gene>
    <name type="primary">rpsL</name>
</gene>
<accession>P0A4A6</accession>
<accession>P97222</accession>
<dbReference type="EMBL" id="U60191">
    <property type="protein sequence ID" value="AAC44743.1"/>
    <property type="molecule type" value="Genomic_DNA"/>
</dbReference>
<dbReference type="RefSeq" id="WP_003948652.1">
    <property type="nucleotide sequence ID" value="NZ_PDCL01000001.1"/>
</dbReference>
<dbReference type="SMR" id="P0A4A6"/>
<dbReference type="GeneID" id="97760361"/>
<dbReference type="GO" id="GO:0015935">
    <property type="term" value="C:small ribosomal subunit"/>
    <property type="evidence" value="ECO:0007669"/>
    <property type="project" value="InterPro"/>
</dbReference>
<dbReference type="GO" id="GO:0019843">
    <property type="term" value="F:rRNA binding"/>
    <property type="evidence" value="ECO:0007669"/>
    <property type="project" value="UniProtKB-UniRule"/>
</dbReference>
<dbReference type="GO" id="GO:0003735">
    <property type="term" value="F:structural constituent of ribosome"/>
    <property type="evidence" value="ECO:0007669"/>
    <property type="project" value="InterPro"/>
</dbReference>
<dbReference type="GO" id="GO:0000049">
    <property type="term" value="F:tRNA binding"/>
    <property type="evidence" value="ECO:0007669"/>
    <property type="project" value="UniProtKB-UniRule"/>
</dbReference>
<dbReference type="GO" id="GO:0046677">
    <property type="term" value="P:response to antibiotic"/>
    <property type="evidence" value="ECO:0007669"/>
    <property type="project" value="UniProtKB-KW"/>
</dbReference>
<dbReference type="GO" id="GO:0006412">
    <property type="term" value="P:translation"/>
    <property type="evidence" value="ECO:0007669"/>
    <property type="project" value="UniProtKB-UniRule"/>
</dbReference>
<dbReference type="CDD" id="cd03368">
    <property type="entry name" value="Ribosomal_S12"/>
    <property type="match status" value="1"/>
</dbReference>
<dbReference type="FunFam" id="2.40.50.140:FF:000001">
    <property type="entry name" value="30S ribosomal protein S12"/>
    <property type="match status" value="1"/>
</dbReference>
<dbReference type="Gene3D" id="2.40.50.140">
    <property type="entry name" value="Nucleic acid-binding proteins"/>
    <property type="match status" value="1"/>
</dbReference>
<dbReference type="HAMAP" id="MF_00403_B">
    <property type="entry name" value="Ribosomal_uS12_B"/>
    <property type="match status" value="1"/>
</dbReference>
<dbReference type="InterPro" id="IPR012340">
    <property type="entry name" value="NA-bd_OB-fold"/>
</dbReference>
<dbReference type="InterPro" id="IPR006032">
    <property type="entry name" value="Ribosomal_uS12"/>
</dbReference>
<dbReference type="InterPro" id="IPR005679">
    <property type="entry name" value="Ribosomal_uS12_bac"/>
</dbReference>
<dbReference type="NCBIfam" id="TIGR00981">
    <property type="entry name" value="rpsL_bact"/>
    <property type="match status" value="1"/>
</dbReference>
<dbReference type="PANTHER" id="PTHR11652">
    <property type="entry name" value="30S RIBOSOMAL PROTEIN S12 FAMILY MEMBER"/>
    <property type="match status" value="1"/>
</dbReference>
<dbReference type="Pfam" id="PF00164">
    <property type="entry name" value="Ribosom_S12_S23"/>
    <property type="match status" value="1"/>
</dbReference>
<dbReference type="PIRSF" id="PIRSF002133">
    <property type="entry name" value="Ribosomal_S12/S23"/>
    <property type="match status" value="1"/>
</dbReference>
<dbReference type="PRINTS" id="PR01034">
    <property type="entry name" value="RIBOSOMALS12"/>
</dbReference>
<dbReference type="SUPFAM" id="SSF50249">
    <property type="entry name" value="Nucleic acid-binding proteins"/>
    <property type="match status" value="1"/>
</dbReference>
<dbReference type="PROSITE" id="PS00055">
    <property type="entry name" value="RIBOSOMAL_S12"/>
    <property type="match status" value="1"/>
</dbReference>
<sequence>MPTIQQLVRKGRQDKVEKNKTPALEGSPQRRGVCTRVFTTTPKKPNSALRKVARVRLTSGIEVTAYIPGEGHNLQEHSIVLVRGGRVKDLPGVRYKIIRGSLDTQGVKNRKQARSRYGAKKEK</sequence>
<organism>
    <name type="scientific">Streptomyces filamentosus</name>
    <name type="common">Streptomyces roseosporus</name>
    <dbReference type="NCBI Taxonomy" id="67294"/>
    <lineage>
        <taxon>Bacteria</taxon>
        <taxon>Bacillati</taxon>
        <taxon>Actinomycetota</taxon>
        <taxon>Actinomycetes</taxon>
        <taxon>Kitasatosporales</taxon>
        <taxon>Streptomycetaceae</taxon>
        <taxon>Streptomyces</taxon>
    </lineage>
</organism>
<comment type="function">
    <text evidence="1">With S4 and S5 plays an important role in translational accuracy.</text>
</comment>
<comment type="function">
    <text evidence="1">Interacts with and stabilizes bases of the 16S rRNA that are involved in tRNA selection in the A site and with the mRNA backbone. Located at the interface of the 30S and 50S subunits, it traverses the body of the 30S subunit contacting proteins on the other side and probably holding the rRNA structure together. The combined cluster of proteins S8, S12 and S17 appears to hold together the shoulder and platform of the 30S subunit (By similarity).</text>
</comment>
<comment type="subunit">
    <text evidence="1">Part of the 30S ribosomal subunit. Contacts proteins S8 and S17. May interact with IF1 in the 30S initiation complex (By similarity).</text>
</comment>
<comment type="biotechnology">
    <text>One streptomycin resistant strain of S.coelicolor and S.lividans (K88E) produces increased quantities of the natural antibiotic actinorhodin; strains which are resistant to multiple drugs produce more antibiotic.</text>
</comment>
<comment type="miscellaneous">
    <text>The streptomycin sensitive allele is dominant to the resistant allele.</text>
</comment>
<comment type="similarity">
    <text evidence="3">Belongs to the universal ribosomal protein uS12 family.</text>
</comment>
<proteinExistence type="evidence at protein level"/>
<name>RS12_STRFL</name>
<feature type="chain" id="PRO_0000146321" description="Small ribosomal subunit protein uS12">
    <location>
        <begin position="1"/>
        <end position="123"/>
    </location>
</feature>
<feature type="region of interest" description="Disordered" evidence="2">
    <location>
        <begin position="1"/>
        <end position="30"/>
    </location>
</feature>
<feature type="compositionally biased region" description="Basic and acidic residues" evidence="2">
    <location>
        <begin position="11"/>
        <end position="20"/>
    </location>
</feature>
<feature type="modified residue" description="3-methylthioaspartic acid" evidence="1">
    <location>
        <position position="89"/>
    </location>
</feature>
<evidence type="ECO:0000250" key="1"/>
<evidence type="ECO:0000256" key="2">
    <source>
        <dbReference type="SAM" id="MobiDB-lite"/>
    </source>
</evidence>
<evidence type="ECO:0000305" key="3"/>
<protein>
    <recommendedName>
        <fullName evidence="3">Small ribosomal subunit protein uS12</fullName>
    </recommendedName>
    <alternativeName>
        <fullName>30S ribosomal protein S12</fullName>
    </alternativeName>
</protein>